<keyword id="KW-1185">Reference proteome</keyword>
<dbReference type="EMBL" id="AE000657">
    <property type="protein sequence ID" value="AAC07490.1"/>
    <property type="molecule type" value="Genomic_DNA"/>
</dbReference>
<dbReference type="PIR" id="A70437">
    <property type="entry name" value="A70437"/>
</dbReference>
<dbReference type="RefSeq" id="NP_214088.1">
    <property type="nucleotide sequence ID" value="NC_000918.1"/>
</dbReference>
<dbReference type="SMR" id="O67523"/>
<dbReference type="STRING" id="224324.aq_1583"/>
<dbReference type="EnsemblBacteria" id="AAC07490">
    <property type="protein sequence ID" value="AAC07490"/>
    <property type="gene ID" value="aq_1583"/>
</dbReference>
<dbReference type="KEGG" id="aae:aq_1583"/>
<dbReference type="HOGENOM" id="CLU_1229397_0_0_0"/>
<dbReference type="InParanoid" id="O67523"/>
<dbReference type="OrthoDB" id="12423at2"/>
<dbReference type="Proteomes" id="UP000000798">
    <property type="component" value="Chromosome"/>
</dbReference>
<dbReference type="GO" id="GO:0035438">
    <property type="term" value="F:cyclic-di-GMP binding"/>
    <property type="evidence" value="ECO:0007669"/>
    <property type="project" value="InterPro"/>
</dbReference>
<dbReference type="Gene3D" id="2.40.10.220">
    <property type="entry name" value="predicted glycosyltransferase like domains"/>
    <property type="match status" value="1"/>
</dbReference>
<dbReference type="InterPro" id="IPR009875">
    <property type="entry name" value="PilZ_domain"/>
</dbReference>
<dbReference type="Pfam" id="PF07238">
    <property type="entry name" value="PilZ"/>
    <property type="match status" value="1"/>
</dbReference>
<feature type="chain" id="PRO_0000186938" description="Uncharacterized protein aq_1583">
    <location>
        <begin position="1"/>
        <end position="229"/>
    </location>
</feature>
<feature type="domain" description="PilZ">
    <location>
        <begin position="102"/>
        <end position="217"/>
    </location>
</feature>
<comment type="similarity">
    <text evidence="1">To A.aeolicus aq_820 and aq_1211.</text>
</comment>
<reference key="1">
    <citation type="journal article" date="1998" name="Nature">
        <title>The complete genome of the hyperthermophilic bacterium Aquifex aeolicus.</title>
        <authorList>
            <person name="Deckert G."/>
            <person name="Warren P.V."/>
            <person name="Gaasterland T."/>
            <person name="Young W.G."/>
            <person name="Lenox A.L."/>
            <person name="Graham D.E."/>
            <person name="Overbeek R."/>
            <person name="Snead M.A."/>
            <person name="Keller M."/>
            <person name="Aujay M."/>
            <person name="Huber R."/>
            <person name="Feldman R.A."/>
            <person name="Short J.M."/>
            <person name="Olsen G.J."/>
            <person name="Swanson R.V."/>
        </authorList>
    </citation>
    <scope>NUCLEOTIDE SEQUENCE [LARGE SCALE GENOMIC DNA]</scope>
    <source>
        <strain>VF5</strain>
    </source>
</reference>
<protein>
    <recommendedName>
        <fullName>Uncharacterized protein aq_1583</fullName>
    </recommendedName>
</protein>
<organism>
    <name type="scientific">Aquifex aeolicus (strain VF5)</name>
    <dbReference type="NCBI Taxonomy" id="224324"/>
    <lineage>
        <taxon>Bacteria</taxon>
        <taxon>Pseudomonadati</taxon>
        <taxon>Aquificota</taxon>
        <taxon>Aquificia</taxon>
        <taxon>Aquificales</taxon>
        <taxon>Aquificaceae</taxon>
        <taxon>Aquifex</taxon>
    </lineage>
</organism>
<proteinExistence type="predicted"/>
<name>Y1583_AQUAE</name>
<evidence type="ECO:0000305" key="1"/>
<sequence length="229" mass="26457">MEEGIKMGTKLTSLFKEGEKYQINTKYKELPIKTNLKLLWIDENMKLLGFSIGACVFKGAFTPGTEVYIKINGKYAYGKVFSCSNELVIEFKEIRKEPEFIRRRTVRVEPDPANPVVVELKVDSYSIKTKAKDISETGVGVILEKDKPESAEVIDIIQKNPNSWFDLYVHLPKHGTAHAKGRVRNLSIEEEGIYIRIGFEAEYSKEDREKVRRYVFERQQEIIKSLKML</sequence>
<gene>
    <name type="ordered locus">aq_1583</name>
</gene>
<accession>O67523</accession>